<reference key="1">
    <citation type="submission" date="2008-02" db="EMBL/GenBank/DDBJ databases">
        <title>Complete sequence of Escherichia coli C str. ATCC 8739.</title>
        <authorList>
            <person name="Copeland A."/>
            <person name="Lucas S."/>
            <person name="Lapidus A."/>
            <person name="Glavina del Rio T."/>
            <person name="Dalin E."/>
            <person name="Tice H."/>
            <person name="Bruce D."/>
            <person name="Goodwin L."/>
            <person name="Pitluck S."/>
            <person name="Kiss H."/>
            <person name="Brettin T."/>
            <person name="Detter J.C."/>
            <person name="Han C."/>
            <person name="Kuske C.R."/>
            <person name="Schmutz J."/>
            <person name="Larimer F."/>
            <person name="Land M."/>
            <person name="Hauser L."/>
            <person name="Kyrpides N."/>
            <person name="Mikhailova N."/>
            <person name="Ingram L."/>
            <person name="Richardson P."/>
        </authorList>
    </citation>
    <scope>NUCLEOTIDE SEQUENCE [LARGE SCALE GENOMIC DNA]</scope>
    <source>
        <strain>ATCC 8739 / DSM 1576 / NBRC 3972 / NCIMB 8545 / WDCM 00012 / Crooks</strain>
    </source>
</reference>
<accession>B1IRU9</accession>
<feature type="chain" id="PRO_0000351587" description="Autoinducer-2 kinase">
    <location>
        <begin position="1"/>
        <end position="530"/>
    </location>
</feature>
<dbReference type="EC" id="2.7.1.189" evidence="1"/>
<dbReference type="EMBL" id="CP000946">
    <property type="protein sequence ID" value="ACA77787.1"/>
    <property type="molecule type" value="Genomic_DNA"/>
</dbReference>
<dbReference type="RefSeq" id="WP_000113150.1">
    <property type="nucleotide sequence ID" value="NZ_MTFT01000006.1"/>
</dbReference>
<dbReference type="SMR" id="B1IRU9"/>
<dbReference type="KEGG" id="ecl:EcolC_2147"/>
<dbReference type="HOGENOM" id="CLU_009281_3_4_6"/>
<dbReference type="GO" id="GO:0005737">
    <property type="term" value="C:cytoplasm"/>
    <property type="evidence" value="ECO:0007669"/>
    <property type="project" value="UniProtKB-SubCell"/>
</dbReference>
<dbReference type="GO" id="GO:0071518">
    <property type="term" value="F:autoinducer-2 kinase activity"/>
    <property type="evidence" value="ECO:0007669"/>
    <property type="project" value="UniProtKB-UniRule"/>
</dbReference>
<dbReference type="GO" id="GO:0005975">
    <property type="term" value="P:carbohydrate metabolic process"/>
    <property type="evidence" value="ECO:0007669"/>
    <property type="project" value="InterPro"/>
</dbReference>
<dbReference type="GO" id="GO:0009372">
    <property type="term" value="P:quorum sensing"/>
    <property type="evidence" value="ECO:0007669"/>
    <property type="project" value="InterPro"/>
</dbReference>
<dbReference type="CDD" id="cd07775">
    <property type="entry name" value="ASKHA_NBD_FGGY_AI-2K"/>
    <property type="match status" value="1"/>
</dbReference>
<dbReference type="FunFam" id="3.30.420.40:FF:000155">
    <property type="entry name" value="Autoinducer-2 kinase"/>
    <property type="match status" value="1"/>
</dbReference>
<dbReference type="Gene3D" id="3.30.420.40">
    <property type="match status" value="2"/>
</dbReference>
<dbReference type="HAMAP" id="MF_02053">
    <property type="entry name" value="LsrK"/>
    <property type="match status" value="1"/>
</dbReference>
<dbReference type="InterPro" id="IPR033676">
    <property type="entry name" value="AI-2_kinase"/>
</dbReference>
<dbReference type="InterPro" id="IPR043129">
    <property type="entry name" value="ATPase_NBD"/>
</dbReference>
<dbReference type="InterPro" id="IPR000577">
    <property type="entry name" value="Carb_kinase_FGGY"/>
</dbReference>
<dbReference type="InterPro" id="IPR018485">
    <property type="entry name" value="FGGY_C"/>
</dbReference>
<dbReference type="InterPro" id="IPR050406">
    <property type="entry name" value="FGGY_Carb_Kinase"/>
</dbReference>
<dbReference type="InterPro" id="IPR018484">
    <property type="entry name" value="FGGY_N"/>
</dbReference>
<dbReference type="NCBIfam" id="NF008187">
    <property type="entry name" value="PRK10939.1"/>
    <property type="match status" value="1"/>
</dbReference>
<dbReference type="PANTHER" id="PTHR43095:SF1">
    <property type="entry name" value="AUTOINDUCER-2 KINASE"/>
    <property type="match status" value="1"/>
</dbReference>
<dbReference type="PANTHER" id="PTHR43095">
    <property type="entry name" value="SUGAR KINASE"/>
    <property type="match status" value="1"/>
</dbReference>
<dbReference type="Pfam" id="PF02782">
    <property type="entry name" value="FGGY_C"/>
    <property type="match status" value="1"/>
</dbReference>
<dbReference type="Pfam" id="PF00370">
    <property type="entry name" value="FGGY_N"/>
    <property type="match status" value="1"/>
</dbReference>
<dbReference type="PIRSF" id="PIRSF000538">
    <property type="entry name" value="GlpK"/>
    <property type="match status" value="1"/>
</dbReference>
<dbReference type="SUPFAM" id="SSF53067">
    <property type="entry name" value="Actin-like ATPase domain"/>
    <property type="match status" value="2"/>
</dbReference>
<comment type="function">
    <text evidence="1">Catalyzes the phosphorylation of autoinducer-2 (AI-2) to phospho-AI-2, which subsequently inactivates the transcriptional regulator LsrR and leads to the transcription of the lsr operon. Phosphorylates the ring-open form of (S)-4,5-dihydroxypentane-2,3-dione (DPD), which is the precursor to all AI-2 signaling molecules, at the C5 position.</text>
</comment>
<comment type="catalytic activity">
    <reaction evidence="1">
        <text>(S)-4,5-dihydroxypentane-2,3-dione + ATP = (2S)-2-hydroxy-3,4-dioxopentyl phosphate + ADP + H(+)</text>
        <dbReference type="Rhea" id="RHEA:15377"/>
        <dbReference type="ChEBI" id="CHEBI:15378"/>
        <dbReference type="ChEBI" id="CHEBI:29484"/>
        <dbReference type="ChEBI" id="CHEBI:30616"/>
        <dbReference type="ChEBI" id="CHEBI:71677"/>
        <dbReference type="ChEBI" id="CHEBI:456216"/>
        <dbReference type="EC" id="2.7.1.189"/>
    </reaction>
</comment>
<comment type="subcellular location">
    <subcellularLocation>
        <location evidence="1">Cytoplasm</location>
    </subcellularLocation>
</comment>
<comment type="similarity">
    <text evidence="1">Belongs to the FGGY kinase family.</text>
</comment>
<sequence length="530" mass="57572">MARLFTPSESKYYLMALDAGTGSIRAVIFDLEGNQIAVGQAEWRHLAVPDVPGSMEFDLNKNWQLACECMRQALHNAGIAPEYIAAVSACSMREGIVLYNNEGTPIWACANVDARAAREVSELKELHNNTFENEVYRATGQTLALSAIPRLLWLAHHRSDIYRQASTITMISDWLAYMLSGELAVDPSNAGTTGLLDLTTRNWKPALLDMAGLRADILSPVKETGTLLGVVSSQAAELCGLKAGTPVVVGGGDVQLGCLGLGVVRPAQTAVLGGTFWQQVVNLAAPVTDPEMNVRVNPHVIPGMVQAESISFFTGLTMRWFRDAFCAEEKLIAERLGIDTYTLLEEMASRVPPGSWGVMPIFSDRMRFKTWYHAAPSFINLSIDPDKCNKATLFRALEENAAIVSACNLQQIADFSNIHPTSLVFAGGGSKGKLWSQILADVSGLPVNIPVVKEATALGCAIAAGVGAGIFSSMAETGERLVRWERTHTPDPEKHELYQDSRDKWQAVYQDQLGLVDHGLTTSLWKAPGL</sequence>
<name>LSRK_ECOLC</name>
<organism>
    <name type="scientific">Escherichia coli (strain ATCC 8739 / DSM 1576 / NBRC 3972 / NCIMB 8545 / WDCM 00012 / Crooks)</name>
    <dbReference type="NCBI Taxonomy" id="481805"/>
    <lineage>
        <taxon>Bacteria</taxon>
        <taxon>Pseudomonadati</taxon>
        <taxon>Pseudomonadota</taxon>
        <taxon>Gammaproteobacteria</taxon>
        <taxon>Enterobacterales</taxon>
        <taxon>Enterobacteriaceae</taxon>
        <taxon>Escherichia</taxon>
    </lineage>
</organism>
<keyword id="KW-0963">Cytoplasm</keyword>
<keyword id="KW-0418">Kinase</keyword>
<keyword id="KW-0808">Transferase</keyword>
<proteinExistence type="inferred from homology"/>
<evidence type="ECO:0000255" key="1">
    <source>
        <dbReference type="HAMAP-Rule" id="MF_02053"/>
    </source>
</evidence>
<gene>
    <name evidence="1" type="primary">lsrK</name>
    <name type="ordered locus">EcolC_2147</name>
</gene>
<protein>
    <recommendedName>
        <fullName evidence="1">Autoinducer-2 kinase</fullName>
        <shortName evidence="1">AI-2 kinase</shortName>
        <ecNumber evidence="1">2.7.1.189</ecNumber>
    </recommendedName>
</protein>